<organism>
    <name type="scientific">Pseudomonas putida (strain ATCC 700007 / DSM 6899 / JCM 31910 / BCRC 17059 / LMG 24140 / F1)</name>
    <dbReference type="NCBI Taxonomy" id="351746"/>
    <lineage>
        <taxon>Bacteria</taxon>
        <taxon>Pseudomonadati</taxon>
        <taxon>Pseudomonadota</taxon>
        <taxon>Gammaproteobacteria</taxon>
        <taxon>Pseudomonadales</taxon>
        <taxon>Pseudomonadaceae</taxon>
        <taxon>Pseudomonas</taxon>
    </lineage>
</organism>
<evidence type="ECO:0000255" key="1">
    <source>
        <dbReference type="HAMAP-Rule" id="MF_01082"/>
    </source>
</evidence>
<sequence>MTELELLGPRASGEPLGTAVLKAVAEDFQVDEVLDIPLSGQGEHLWLWVEKRDLNTEEAARRLARAAGVPVRSISYAGLKDRQALTRQWFSLHLPGKADPDLSRAEDASLRVLKQVRHQRKLQRGAHSANGFTLRLTALAADHQAVDARLEQLRQQGVPNYFGTQRFGHGGGNVHDALDWAARKALPEQRNVRSRLLSAGRSYLFNQLLAARVADGSWARAQVGDLLAFTDSRSFFPAGEAECADPRLAILDLHPTGPMWGEGASPAGAAPAQLENAIGARQPALCQWLAQAGMDHERRILRLPIGGLTWHYPEPDILQLEFVLPAGCFATVVVREVVDLVSAGQTDSPCVF</sequence>
<protein>
    <recommendedName>
        <fullName evidence="1">tRNA pseudouridine synthase D</fullName>
        <ecNumber evidence="1">5.4.99.27</ecNumber>
    </recommendedName>
    <alternativeName>
        <fullName evidence="1">tRNA pseudouridine(13) synthase</fullName>
    </alternativeName>
    <alternativeName>
        <fullName evidence="1">tRNA pseudouridylate synthase D</fullName>
    </alternativeName>
    <alternativeName>
        <fullName evidence="1">tRNA-uridine isomerase D</fullName>
    </alternativeName>
</protein>
<reference key="1">
    <citation type="submission" date="2007-05" db="EMBL/GenBank/DDBJ databases">
        <title>Complete sequence of Pseudomonas putida F1.</title>
        <authorList>
            <consortium name="US DOE Joint Genome Institute"/>
            <person name="Copeland A."/>
            <person name="Lucas S."/>
            <person name="Lapidus A."/>
            <person name="Barry K."/>
            <person name="Detter J.C."/>
            <person name="Glavina del Rio T."/>
            <person name="Hammon N."/>
            <person name="Israni S."/>
            <person name="Dalin E."/>
            <person name="Tice H."/>
            <person name="Pitluck S."/>
            <person name="Chain P."/>
            <person name="Malfatti S."/>
            <person name="Shin M."/>
            <person name="Vergez L."/>
            <person name="Schmutz J."/>
            <person name="Larimer F."/>
            <person name="Land M."/>
            <person name="Hauser L."/>
            <person name="Kyrpides N."/>
            <person name="Lykidis A."/>
            <person name="Parales R."/>
            <person name="Richardson P."/>
        </authorList>
    </citation>
    <scope>NUCLEOTIDE SEQUENCE [LARGE SCALE GENOMIC DNA]</scope>
    <source>
        <strain>ATCC 700007 / DSM 6899 / JCM 31910 / BCRC 17059 / LMG 24140 / F1</strain>
    </source>
</reference>
<comment type="function">
    <text evidence="1">Responsible for synthesis of pseudouridine from uracil-13 in transfer RNAs.</text>
</comment>
<comment type="catalytic activity">
    <reaction evidence="1">
        <text>uridine(13) in tRNA = pseudouridine(13) in tRNA</text>
        <dbReference type="Rhea" id="RHEA:42540"/>
        <dbReference type="Rhea" id="RHEA-COMP:10105"/>
        <dbReference type="Rhea" id="RHEA-COMP:10106"/>
        <dbReference type="ChEBI" id="CHEBI:65314"/>
        <dbReference type="ChEBI" id="CHEBI:65315"/>
        <dbReference type="EC" id="5.4.99.27"/>
    </reaction>
</comment>
<comment type="similarity">
    <text evidence="1">Belongs to the pseudouridine synthase TruD family.</text>
</comment>
<accession>A5W822</accession>
<proteinExistence type="inferred from homology"/>
<dbReference type="EC" id="5.4.99.27" evidence="1"/>
<dbReference type="EMBL" id="CP000712">
    <property type="protein sequence ID" value="ABQ80282.1"/>
    <property type="molecule type" value="Genomic_DNA"/>
</dbReference>
<dbReference type="SMR" id="A5W822"/>
<dbReference type="KEGG" id="ppf:Pput_4158"/>
<dbReference type="eggNOG" id="COG0585">
    <property type="taxonomic scope" value="Bacteria"/>
</dbReference>
<dbReference type="HOGENOM" id="CLU_005281_4_0_6"/>
<dbReference type="GO" id="GO:0005829">
    <property type="term" value="C:cytosol"/>
    <property type="evidence" value="ECO:0007669"/>
    <property type="project" value="TreeGrafter"/>
</dbReference>
<dbReference type="GO" id="GO:0003723">
    <property type="term" value="F:RNA binding"/>
    <property type="evidence" value="ECO:0007669"/>
    <property type="project" value="InterPro"/>
</dbReference>
<dbReference type="GO" id="GO:0160150">
    <property type="term" value="F:tRNA pseudouridine(13) synthase activity"/>
    <property type="evidence" value="ECO:0007669"/>
    <property type="project" value="UniProtKB-EC"/>
</dbReference>
<dbReference type="GO" id="GO:0031119">
    <property type="term" value="P:tRNA pseudouridine synthesis"/>
    <property type="evidence" value="ECO:0007669"/>
    <property type="project" value="UniProtKB-UniRule"/>
</dbReference>
<dbReference type="CDD" id="cd02575">
    <property type="entry name" value="PseudoU_synth_EcTruD"/>
    <property type="match status" value="1"/>
</dbReference>
<dbReference type="Gene3D" id="3.30.2350.20">
    <property type="entry name" value="TruD, catalytic domain"/>
    <property type="match status" value="1"/>
</dbReference>
<dbReference type="Gene3D" id="3.30.2340.10">
    <property type="entry name" value="TruD, insertion domain"/>
    <property type="match status" value="1"/>
</dbReference>
<dbReference type="HAMAP" id="MF_01082">
    <property type="entry name" value="TruD"/>
    <property type="match status" value="1"/>
</dbReference>
<dbReference type="InterPro" id="IPR020103">
    <property type="entry name" value="PsdUridine_synth_cat_dom_sf"/>
</dbReference>
<dbReference type="InterPro" id="IPR001656">
    <property type="entry name" value="PsdUridine_synth_TruD"/>
</dbReference>
<dbReference type="InterPro" id="IPR020119">
    <property type="entry name" value="PsdUridine_synth_TruD_CS"/>
</dbReference>
<dbReference type="InterPro" id="IPR011760">
    <property type="entry name" value="PsdUridine_synth_TruD_insert"/>
</dbReference>
<dbReference type="InterPro" id="IPR042214">
    <property type="entry name" value="TruD_catalytic"/>
</dbReference>
<dbReference type="InterPro" id="IPR043165">
    <property type="entry name" value="TruD_insert_sf"/>
</dbReference>
<dbReference type="InterPro" id="IPR050170">
    <property type="entry name" value="TruD_pseudoU_synthase"/>
</dbReference>
<dbReference type="NCBIfam" id="NF002153">
    <property type="entry name" value="PRK00984.1-2"/>
    <property type="match status" value="1"/>
</dbReference>
<dbReference type="PANTHER" id="PTHR47811">
    <property type="entry name" value="TRNA PSEUDOURIDINE SYNTHASE D"/>
    <property type="match status" value="1"/>
</dbReference>
<dbReference type="PANTHER" id="PTHR47811:SF1">
    <property type="entry name" value="TRNA PSEUDOURIDINE SYNTHASE D"/>
    <property type="match status" value="1"/>
</dbReference>
<dbReference type="Pfam" id="PF01142">
    <property type="entry name" value="TruD"/>
    <property type="match status" value="2"/>
</dbReference>
<dbReference type="SUPFAM" id="SSF55120">
    <property type="entry name" value="Pseudouridine synthase"/>
    <property type="match status" value="1"/>
</dbReference>
<dbReference type="PROSITE" id="PS50984">
    <property type="entry name" value="TRUD"/>
    <property type="match status" value="1"/>
</dbReference>
<dbReference type="PROSITE" id="PS01268">
    <property type="entry name" value="UPF0024"/>
    <property type="match status" value="1"/>
</dbReference>
<feature type="chain" id="PRO_1000084758" description="tRNA pseudouridine synthase D">
    <location>
        <begin position="1"/>
        <end position="352"/>
    </location>
</feature>
<feature type="domain" description="TRUD" evidence="1">
    <location>
        <begin position="157"/>
        <end position="303"/>
    </location>
</feature>
<feature type="active site" description="Nucleophile" evidence="1">
    <location>
        <position position="81"/>
    </location>
</feature>
<keyword id="KW-0413">Isomerase</keyword>
<keyword id="KW-0819">tRNA processing</keyword>
<name>TRUD_PSEP1</name>
<gene>
    <name evidence="1" type="primary">truD</name>
    <name type="ordered locus">Pput_4158</name>
</gene>